<reference key="1">
    <citation type="journal article" date="1993" name="J. Biol. Chem.">
        <title>Cytochrome oxidase genes from Thermus thermophilus. Nucleotide sequence of the fused gene and analysis of the deduced primary structures for subunits I and III of cytochrome caa3.</title>
        <authorList>
            <person name="Mather M.W."/>
            <person name="Springer P."/>
            <person name="Hensel S."/>
            <person name="Buse G."/>
            <person name="Fee J.A."/>
        </authorList>
    </citation>
    <scope>NUCLEOTIDE SEQUENCE [GENOMIC DNA]</scope>
</reference>
<reference key="2">
    <citation type="submission" date="2004-11" db="EMBL/GenBank/DDBJ databases">
        <title>Complete genome sequence of Thermus thermophilus HB8.</title>
        <authorList>
            <person name="Masui R."/>
            <person name="Kurokawa K."/>
            <person name="Nakagawa N."/>
            <person name="Tokunaga F."/>
            <person name="Koyama Y."/>
            <person name="Shibata T."/>
            <person name="Oshima T."/>
            <person name="Yokoyama S."/>
            <person name="Yasunaga T."/>
            <person name="Kuramitsu S."/>
        </authorList>
    </citation>
    <scope>NUCLEOTIDE SEQUENCE [LARGE SCALE GENOMIC DNA]</scope>
    <source>
        <strain>ATCC 27634 / DSM 579 / HB8</strain>
    </source>
</reference>
<reference key="3">
    <citation type="journal article" date="1999" name="Protein Sci.">
        <title>Evidence for a copper-coordinated histidine-tyrosine cross-link in the active site of cytochrome oxidase.</title>
        <authorList>
            <person name="Buse G."/>
            <person name="Soulimane T."/>
            <person name="Dewor M."/>
            <person name="Meyer H.E."/>
            <person name="Blueggel M."/>
        </authorList>
    </citation>
    <scope>COVALENT BOND</scope>
</reference>
<comment type="function">
    <text>Cytochrome c oxidase is the component of the respiratory chain that catalyzes the reduction of oxygen to water. Subunits 1-3 form the functional core of the enzyme complex. Co I is the catalytic subunit of the enzyme. Electrons originating in cytochrome c are transferred via the copper A center of subunit 2 and heme a of subunit 1 to the bimetallic center formed by heme a3 and copper B. This cytochrome c oxidase shows proton pump activity across the membrane in addition to the electron transfer.</text>
</comment>
<comment type="catalytic activity">
    <reaction>
        <text>4 Fe(II)-[cytochrome c] + O2 + 8 H(+)(in) = 4 Fe(III)-[cytochrome c] + 2 H2O + 4 H(+)(out)</text>
        <dbReference type="Rhea" id="RHEA:11436"/>
        <dbReference type="Rhea" id="RHEA-COMP:10350"/>
        <dbReference type="Rhea" id="RHEA-COMP:14399"/>
        <dbReference type="ChEBI" id="CHEBI:15377"/>
        <dbReference type="ChEBI" id="CHEBI:15378"/>
        <dbReference type="ChEBI" id="CHEBI:15379"/>
        <dbReference type="ChEBI" id="CHEBI:29033"/>
        <dbReference type="ChEBI" id="CHEBI:29034"/>
        <dbReference type="EC" id="7.1.1.9"/>
    </reaction>
</comment>
<comment type="cofactor">
    <cofactor>
        <name>Cu(2+)</name>
        <dbReference type="ChEBI" id="CHEBI:29036"/>
    </cofactor>
    <text>Binds 1 copper B ion per subunit.</text>
</comment>
<comment type="cofactor">
    <cofactor>
        <name>heme</name>
        <dbReference type="ChEBI" id="CHEBI:30413"/>
    </cofactor>
    <text>Binds 2 heme groups per subunit.</text>
</comment>
<comment type="pathway">
    <text>Energy metabolism; oxidative phosphorylation.</text>
</comment>
<comment type="subunit">
    <text>Possibly a heterodimer of A-protein (contains: cytochrome c oxidase subunits I and III) and subunit II. The A-protein could also present a precursor form of subunits I and III.</text>
</comment>
<comment type="subcellular location">
    <subcellularLocation>
        <location>Cell membrane</location>
        <topology>Multi-pass membrane protein</topology>
    </subcellularLocation>
</comment>
<comment type="similarity">
    <text evidence="3">In the N-terminal section; belongs to the heme-copper respiratory oxidase family.</text>
</comment>
<comment type="similarity">
    <text evidence="3">In the C-terminal section; belongs to the cytochrome c oxidase subunit 3 family.</text>
</comment>
<feature type="chain" id="PRO_0000183464" description="Cytochrome c oxidase polypeptide I+III">
    <location>
        <begin position="1"/>
        <end position="791"/>
    </location>
</feature>
<feature type="transmembrane region" description="Helical" evidence="2">
    <location>
        <begin position="29"/>
        <end position="49"/>
    </location>
</feature>
<feature type="transmembrane region" description="Helical" evidence="2">
    <location>
        <begin position="78"/>
        <end position="98"/>
    </location>
</feature>
<feature type="transmembrane region" description="Helical" evidence="2">
    <location>
        <begin position="111"/>
        <end position="131"/>
    </location>
</feature>
<feature type="transmembrane region" description="Helical" evidence="2">
    <location>
        <begin position="155"/>
        <end position="175"/>
    </location>
</feature>
<feature type="transmembrane region" description="Helical" evidence="2">
    <location>
        <begin position="201"/>
        <end position="221"/>
    </location>
</feature>
<feature type="transmembrane region" description="Helical" evidence="2">
    <location>
        <begin position="244"/>
        <end position="264"/>
    </location>
</feature>
<feature type="transmembrane region" description="Helical" evidence="2">
    <location>
        <begin position="282"/>
        <end position="302"/>
    </location>
</feature>
<feature type="transmembrane region" description="Helical" evidence="2">
    <location>
        <begin position="312"/>
        <end position="332"/>
    </location>
</feature>
<feature type="transmembrane region" description="Helical" evidence="2">
    <location>
        <begin position="347"/>
        <end position="367"/>
    </location>
</feature>
<feature type="transmembrane region" description="Helical" evidence="2">
    <location>
        <begin position="381"/>
        <end position="401"/>
    </location>
</feature>
<feature type="transmembrane region" description="Helical" evidence="2">
    <location>
        <begin position="423"/>
        <end position="443"/>
    </location>
</feature>
<feature type="transmembrane region" description="Helical" evidence="2">
    <location>
        <begin position="464"/>
        <end position="484"/>
    </location>
</feature>
<feature type="transmembrane region" description="Helical" evidence="2">
    <location>
        <begin position="566"/>
        <end position="586"/>
    </location>
</feature>
<feature type="transmembrane region" description="Helical" evidence="2">
    <location>
        <begin position="617"/>
        <end position="637"/>
    </location>
</feature>
<feature type="transmembrane region" description="Helical" evidence="2">
    <location>
        <begin position="657"/>
        <end position="677"/>
    </location>
</feature>
<feature type="transmembrane region" description="Helical" evidence="2">
    <location>
        <begin position="691"/>
        <end position="711"/>
    </location>
</feature>
<feature type="transmembrane region" description="Helical" evidence="2">
    <location>
        <begin position="729"/>
        <end position="749"/>
    </location>
</feature>
<feature type="transmembrane region" description="Helical" evidence="2">
    <location>
        <begin position="771"/>
        <end position="791"/>
    </location>
</feature>
<feature type="region of interest" description="COX1">
    <location>
        <begin position="1"/>
        <end position="473"/>
    </location>
</feature>
<feature type="region of interest" description="COX3">
    <location>
        <begin position="545"/>
        <end position="791"/>
    </location>
</feature>
<feature type="binding site" description="axial binding residue" evidence="3">
    <location>
        <position position="73"/>
    </location>
    <ligand>
        <name>Fe(II)-heme a</name>
        <dbReference type="ChEBI" id="CHEBI:61715"/>
    </ligand>
    <ligandPart>
        <name>Fe</name>
        <dbReference type="ChEBI" id="CHEBI:18248"/>
    </ligandPart>
</feature>
<feature type="binding site">
    <location>
        <position position="250"/>
    </location>
    <ligand>
        <name>Cu cation</name>
        <dbReference type="ChEBI" id="CHEBI:23378"/>
        <label>B</label>
    </ligand>
</feature>
<feature type="binding site">
    <location>
        <position position="254"/>
    </location>
    <ligand>
        <name>Cu cation</name>
        <dbReference type="ChEBI" id="CHEBI:23378"/>
        <label>B</label>
    </ligand>
</feature>
<feature type="binding site" evidence="3">
    <location>
        <position position="299"/>
    </location>
    <ligand>
        <name>Cu cation</name>
        <dbReference type="ChEBI" id="CHEBI:23378"/>
        <label>B</label>
    </ligand>
</feature>
<feature type="binding site" evidence="3">
    <location>
        <position position="300"/>
    </location>
    <ligand>
        <name>Cu cation</name>
        <dbReference type="ChEBI" id="CHEBI:23378"/>
        <label>B</label>
    </ligand>
</feature>
<feature type="binding site" description="axial binding residue" evidence="3">
    <location>
        <position position="385"/>
    </location>
    <ligand>
        <name>heme a3</name>
        <dbReference type="ChEBI" id="CHEBI:83282"/>
    </ligand>
    <ligandPart>
        <name>Fe</name>
        <dbReference type="ChEBI" id="CHEBI:18248"/>
    </ligandPart>
</feature>
<feature type="binding site" description="axial binding residue" evidence="3">
    <location>
        <position position="387"/>
    </location>
    <ligand>
        <name>Fe(II)-heme a</name>
        <dbReference type="ChEBI" id="CHEBI:61715"/>
    </ligand>
    <ligandPart>
        <name>Fe</name>
        <dbReference type="ChEBI" id="CHEBI:18248"/>
    </ligandPart>
</feature>
<feature type="cross-link" description="1'-histidyl-3'-tyrosine (His-Tyr)" evidence="1">
    <location>
        <begin position="250"/>
        <end position="254"/>
    </location>
</feature>
<feature type="helix" evidence="4">
    <location>
        <begin position="13"/>
        <end position="20"/>
    </location>
</feature>
<feature type="helix" evidence="4">
    <location>
        <begin position="24"/>
        <end position="52"/>
    </location>
</feature>
<feature type="helix" evidence="4">
    <location>
        <begin position="63"/>
        <end position="80"/>
    </location>
</feature>
<feature type="helix" evidence="4">
    <location>
        <begin position="82"/>
        <end position="85"/>
    </location>
</feature>
<feature type="turn" evidence="4">
    <location>
        <begin position="86"/>
        <end position="88"/>
    </location>
</feature>
<feature type="helix" evidence="4">
    <location>
        <begin position="89"/>
        <end position="99"/>
    </location>
</feature>
<feature type="helix" evidence="4">
    <location>
        <begin position="107"/>
        <end position="126"/>
    </location>
</feature>
<feature type="helix" evidence="4">
    <location>
        <begin position="127"/>
        <end position="129"/>
    </location>
</feature>
<feature type="turn" evidence="4">
    <location>
        <begin position="138"/>
        <end position="141"/>
    </location>
</feature>
<feature type="helix" evidence="4">
    <location>
        <begin position="145"/>
        <end position="148"/>
    </location>
</feature>
<feature type="helix" evidence="4">
    <location>
        <begin position="153"/>
        <end position="180"/>
    </location>
</feature>
<feature type="helix" evidence="4">
    <location>
        <begin position="188"/>
        <end position="190"/>
    </location>
</feature>
<feature type="helix" evidence="4">
    <location>
        <begin position="193"/>
        <end position="208"/>
    </location>
</feature>
<feature type="helix" evidence="4">
    <location>
        <begin position="210"/>
        <end position="225"/>
    </location>
</feature>
<feature type="helix" evidence="4">
    <location>
        <begin position="232"/>
        <end position="234"/>
    </location>
</feature>
<feature type="helix" evidence="4">
    <location>
        <begin position="238"/>
        <end position="249"/>
    </location>
</feature>
<feature type="helix" evidence="4">
    <location>
        <begin position="251"/>
        <end position="272"/>
    </location>
</feature>
<feature type="helix" evidence="4">
    <location>
        <begin position="279"/>
        <end position="292"/>
    </location>
</feature>
<feature type="helix" evidence="4">
    <location>
        <begin position="297"/>
        <end position="300"/>
    </location>
</feature>
<feature type="helix" evidence="4">
    <location>
        <begin position="308"/>
        <end position="320"/>
    </location>
</feature>
<feature type="helix" evidence="4">
    <location>
        <begin position="322"/>
        <end position="336"/>
    </location>
</feature>
<feature type="helix" evidence="4">
    <location>
        <begin position="345"/>
        <end position="368"/>
    </location>
</feature>
<feature type="helix" evidence="4">
    <location>
        <begin position="370"/>
        <end position="376"/>
    </location>
</feature>
<feature type="helix" evidence="4">
    <location>
        <begin position="380"/>
        <end position="390"/>
    </location>
</feature>
<feature type="turn" evidence="4">
    <location>
        <begin position="391"/>
        <end position="393"/>
    </location>
</feature>
<feature type="helix" evidence="4">
    <location>
        <begin position="394"/>
        <end position="410"/>
    </location>
</feature>
<feature type="helix" evidence="4">
    <location>
        <begin position="416"/>
        <end position="442"/>
    </location>
</feature>
<feature type="strand" evidence="4">
    <location>
        <begin position="446"/>
        <end position="448"/>
    </location>
</feature>
<feature type="strand" evidence="4">
    <location>
        <begin position="454"/>
        <end position="456"/>
    </location>
</feature>
<feature type="helix" evidence="4">
    <location>
        <begin position="459"/>
        <end position="490"/>
    </location>
</feature>
<feature type="helix" evidence="4">
    <location>
        <begin position="504"/>
        <end position="507"/>
    </location>
</feature>
<feature type="strand" evidence="4">
    <location>
        <begin position="526"/>
        <end position="528"/>
    </location>
</feature>
<feature type="helix" evidence="4">
    <location>
        <begin position="530"/>
        <end position="536"/>
    </location>
</feature>
<feature type="helix" evidence="4">
    <location>
        <begin position="546"/>
        <end position="548"/>
    </location>
</feature>
<feature type="helix" evidence="4">
    <location>
        <begin position="557"/>
        <end position="574"/>
    </location>
</feature>
<feature type="helix" evidence="4">
    <location>
        <begin position="580"/>
        <end position="597"/>
    </location>
</feature>
<feature type="strand" evidence="4">
    <location>
        <begin position="611"/>
        <end position="614"/>
    </location>
</feature>
<feature type="helix" evidence="4">
    <location>
        <begin position="616"/>
        <end position="644"/>
    </location>
</feature>
<feature type="helix" evidence="4">
    <location>
        <begin position="657"/>
        <end position="683"/>
    </location>
</feature>
<feature type="helix" evidence="4">
    <location>
        <begin position="686"/>
        <end position="715"/>
    </location>
</feature>
<feature type="turn" evidence="4">
    <location>
        <begin position="720"/>
        <end position="722"/>
    </location>
</feature>
<feature type="helix" evidence="4">
    <location>
        <begin position="724"/>
        <end position="756"/>
    </location>
</feature>
<feature type="helix" evidence="4">
    <location>
        <begin position="765"/>
        <end position="788"/>
    </location>
</feature>
<proteinExistence type="evidence at protein level"/>
<gene>
    <name type="primary">caaA</name>
    <name type="synonym">ctaD</name>
    <name type="ordered locus">TTHA0312</name>
</gene>
<accession>P98005</accession>
<accession>Q5SLI1</accession>
<name>COX13_THET8</name>
<evidence type="ECO:0000250" key="1"/>
<evidence type="ECO:0000255" key="2"/>
<evidence type="ECO:0000305" key="3"/>
<evidence type="ECO:0007829" key="4">
    <source>
        <dbReference type="PDB" id="2YEV"/>
    </source>
</evidence>
<dbReference type="EC" id="7.1.1.9"/>
<dbReference type="EMBL" id="M84341">
    <property type="protein sequence ID" value="AAA27485.1"/>
    <property type="molecule type" value="Genomic_DNA"/>
</dbReference>
<dbReference type="EMBL" id="AP008226">
    <property type="protein sequence ID" value="BAD70135.1"/>
    <property type="molecule type" value="Genomic_DNA"/>
</dbReference>
<dbReference type="PIR" id="A46616">
    <property type="entry name" value="A46616"/>
</dbReference>
<dbReference type="RefSeq" id="WP_011227851.1">
    <property type="nucleotide sequence ID" value="NC_006461.1"/>
</dbReference>
<dbReference type="RefSeq" id="YP_143578.1">
    <property type="nucleotide sequence ID" value="NC_006461.1"/>
</dbReference>
<dbReference type="PDB" id="2YEV">
    <property type="method" value="X-ray"/>
    <property type="resolution" value="2.36 A"/>
    <property type="chains" value="A/D=1-791"/>
</dbReference>
<dbReference type="PDBsum" id="2YEV"/>
<dbReference type="SMR" id="P98005"/>
<dbReference type="DIP" id="DIP-59901N"/>
<dbReference type="IntAct" id="P98005">
    <property type="interactions" value="2"/>
</dbReference>
<dbReference type="TCDB" id="3.D.4.4.3">
    <property type="family name" value="the proton-translocating cytochrome oxidase (cox) superfamily"/>
</dbReference>
<dbReference type="EnsemblBacteria" id="BAD70135">
    <property type="protein sequence ID" value="BAD70135"/>
    <property type="gene ID" value="BAD70135"/>
</dbReference>
<dbReference type="GeneID" id="3168081"/>
<dbReference type="KEGG" id="ttj:TTHA0312"/>
<dbReference type="PATRIC" id="fig|300852.9.peg.312"/>
<dbReference type="eggNOG" id="COG0843">
    <property type="taxonomic scope" value="Bacteria"/>
</dbReference>
<dbReference type="eggNOG" id="COG1845">
    <property type="taxonomic scope" value="Bacteria"/>
</dbReference>
<dbReference type="HOGENOM" id="CLU_011899_4_0_0"/>
<dbReference type="PhylomeDB" id="P98005"/>
<dbReference type="BRENDA" id="7.1.1.9">
    <property type="organism ID" value="2305"/>
</dbReference>
<dbReference type="UniPathway" id="UPA00705"/>
<dbReference type="EvolutionaryTrace" id="P98005"/>
<dbReference type="Proteomes" id="UP000000532">
    <property type="component" value="Chromosome"/>
</dbReference>
<dbReference type="GO" id="GO:0005886">
    <property type="term" value="C:plasma membrane"/>
    <property type="evidence" value="ECO:0007669"/>
    <property type="project" value="UniProtKB-SubCell"/>
</dbReference>
<dbReference type="GO" id="GO:0004129">
    <property type="term" value="F:cytochrome-c oxidase activity"/>
    <property type="evidence" value="ECO:0007669"/>
    <property type="project" value="UniProtKB-EC"/>
</dbReference>
<dbReference type="GO" id="GO:0020037">
    <property type="term" value="F:heme binding"/>
    <property type="evidence" value="ECO:0007669"/>
    <property type="project" value="InterPro"/>
</dbReference>
<dbReference type="GO" id="GO:0046872">
    <property type="term" value="F:metal ion binding"/>
    <property type="evidence" value="ECO:0007669"/>
    <property type="project" value="UniProtKB-KW"/>
</dbReference>
<dbReference type="GO" id="GO:0015990">
    <property type="term" value="P:electron transport coupled proton transport"/>
    <property type="evidence" value="ECO:0007669"/>
    <property type="project" value="InterPro"/>
</dbReference>
<dbReference type="GO" id="GO:0006119">
    <property type="term" value="P:oxidative phosphorylation"/>
    <property type="evidence" value="ECO:0007669"/>
    <property type="project" value="UniProtKB-UniPathway"/>
</dbReference>
<dbReference type="GO" id="GO:0022904">
    <property type="term" value="P:respiratory electron transport chain"/>
    <property type="evidence" value="ECO:0007669"/>
    <property type="project" value="InterPro"/>
</dbReference>
<dbReference type="CDD" id="cd00386">
    <property type="entry name" value="Heme_Cu_Oxidase_III_like"/>
    <property type="match status" value="1"/>
</dbReference>
<dbReference type="FunFam" id="1.20.210.10:FF:000006">
    <property type="entry name" value="Cytochrome c oxidase subunit 1"/>
    <property type="match status" value="1"/>
</dbReference>
<dbReference type="Gene3D" id="1.10.287.70">
    <property type="match status" value="1"/>
</dbReference>
<dbReference type="Gene3D" id="1.20.120.80">
    <property type="entry name" value="Cytochrome c oxidase, subunit III, four-helix bundle"/>
    <property type="match status" value="1"/>
</dbReference>
<dbReference type="Gene3D" id="1.20.210.10">
    <property type="entry name" value="Cytochrome c oxidase-like, subunit I domain"/>
    <property type="match status" value="1"/>
</dbReference>
<dbReference type="InterPro" id="IPR023616">
    <property type="entry name" value="Cyt_c_oxase-like_su1_dom"/>
</dbReference>
<dbReference type="InterPro" id="IPR036927">
    <property type="entry name" value="Cyt_c_oxase-like_su1_sf"/>
</dbReference>
<dbReference type="InterPro" id="IPR000883">
    <property type="entry name" value="Cyt_C_Oxase_1"/>
</dbReference>
<dbReference type="InterPro" id="IPR023615">
    <property type="entry name" value="Cyt_c_Oxase_su1_BS"/>
</dbReference>
<dbReference type="InterPro" id="IPR000298">
    <property type="entry name" value="Cyt_c_oxidase-like_su3"/>
</dbReference>
<dbReference type="InterPro" id="IPR014241">
    <property type="entry name" value="Cyt_c_oxidase_su1_bac"/>
</dbReference>
<dbReference type="InterPro" id="IPR035973">
    <property type="entry name" value="Cyt_c_oxidase_su3-like_sf"/>
</dbReference>
<dbReference type="InterPro" id="IPR013833">
    <property type="entry name" value="Cyt_c_oxidase_su3_a-hlx"/>
</dbReference>
<dbReference type="NCBIfam" id="TIGR02891">
    <property type="entry name" value="CtaD_CoxA"/>
    <property type="match status" value="1"/>
</dbReference>
<dbReference type="PANTHER" id="PTHR10422">
    <property type="entry name" value="CYTOCHROME C OXIDASE SUBUNIT 1"/>
    <property type="match status" value="1"/>
</dbReference>
<dbReference type="PANTHER" id="PTHR10422:SF18">
    <property type="entry name" value="CYTOCHROME C OXIDASE SUBUNIT 1"/>
    <property type="match status" value="1"/>
</dbReference>
<dbReference type="Pfam" id="PF00115">
    <property type="entry name" value="COX1"/>
    <property type="match status" value="1"/>
</dbReference>
<dbReference type="Pfam" id="PF00510">
    <property type="entry name" value="COX3"/>
    <property type="match status" value="1"/>
</dbReference>
<dbReference type="PRINTS" id="PR01165">
    <property type="entry name" value="CYCOXIDASEI"/>
</dbReference>
<dbReference type="SUPFAM" id="SSF81442">
    <property type="entry name" value="Cytochrome c oxidase subunit I-like"/>
    <property type="match status" value="1"/>
</dbReference>
<dbReference type="SUPFAM" id="SSF81452">
    <property type="entry name" value="Cytochrome c oxidase subunit III-like"/>
    <property type="match status" value="1"/>
</dbReference>
<dbReference type="PROSITE" id="PS50855">
    <property type="entry name" value="COX1"/>
    <property type="match status" value="1"/>
</dbReference>
<dbReference type="PROSITE" id="PS00077">
    <property type="entry name" value="COX1_CUB"/>
    <property type="match status" value="1"/>
</dbReference>
<dbReference type="PROSITE" id="PS50253">
    <property type="entry name" value="COX3"/>
    <property type="match status" value="1"/>
</dbReference>
<sequence length="791" mass="89214">MAITAKPKAGVWAVLWDLLTTVDHKKIGLMYTATAFFAFALAGVFSLLIRTQLAVPNNQFLTGEQYNQILTLHGATMLFFFIIQAGLTGFGNFVVPLMLGARDVALPRVNAFSYWAFLGAIVLALMSYFFPGGAPSVGWTFYYPFSAQSESGVDFYLAAILLLGFSSLLGNANFVATIYNLRAQGMSLWKMPIYVWSVFAASVLNLFSLAGLTAATLLVLLERKIGLSWFNPAVGGDPVLFQQFFWFYSHPTVYVMLLPYLGILAEVASTFARKPLFGYRQMVWAQMGIVVLGTMVWAHHMFTVGESTLFQIAFAFFTALIAVPTGVKLFNIIGTLWGGKLQMKTPLYWVLGFIFNFLLGGITGVMLSMTPLDYQFHDSYFVVAHFHNVLMAGSGFGAFAGLYYWWPKMTGRMYDERLGRLHFWLFLVGYLLTFLPQYALGYLGMPRRYYTYNADIAGWPELNLLSTIGAYILGLGGLVWIYTMWKSLRSGPKAPDNPWGGYTLEWLTASPPKAHNFDVKLPTEFPSERPLYDWKKKGVELKPEDPAHIHLPNSSFWPFYSAATLFAFFVAVAALPVPNVWMWVFLALFAYGLVRWALEDEYSHPVEHHTVTGKSNAWMGMAWFIVSEVGLFAILIAGYLYLRLSGAATPPEERPALWLALLNTFLLVSSSFTVHFAHHDLRRGRFNPFRFGLLVTIILGVLFFLVQSWEFYQFYHHSSWQENLWTAAFFTIVGLHGLHVVIGGFGLILAYLQALRGKITLHNHGTLEAASMYWHLVDAVWLVIVTIFYVW</sequence>
<keyword id="KW-0002">3D-structure</keyword>
<keyword id="KW-1003">Cell membrane</keyword>
<keyword id="KW-0186">Copper</keyword>
<keyword id="KW-0249">Electron transport</keyword>
<keyword id="KW-0349">Heme</keyword>
<keyword id="KW-0375">Hydrogen ion transport</keyword>
<keyword id="KW-0406">Ion transport</keyword>
<keyword id="KW-0408">Iron</keyword>
<keyword id="KW-0472">Membrane</keyword>
<keyword id="KW-0479">Metal-binding</keyword>
<keyword id="KW-1185">Reference proteome</keyword>
<keyword id="KW-0679">Respiratory chain</keyword>
<keyword id="KW-1278">Translocase</keyword>
<keyword id="KW-0812">Transmembrane</keyword>
<keyword id="KW-1133">Transmembrane helix</keyword>
<keyword id="KW-0813">Transport</keyword>
<protein>
    <recommendedName>
        <fullName>Cytochrome c oxidase polypeptide I+III</fullName>
        <ecNumber>7.1.1.9</ecNumber>
    </recommendedName>
    <alternativeName>
        <fullName>Cytochrome c aa(3) subunit 1</fullName>
        <shortName>A-protein</shortName>
        <shortName>Cytochrome caa3</shortName>
    </alternativeName>
</protein>
<organism>
    <name type="scientific">Thermus thermophilus (strain ATCC 27634 / DSM 579 / HB8)</name>
    <dbReference type="NCBI Taxonomy" id="300852"/>
    <lineage>
        <taxon>Bacteria</taxon>
        <taxon>Thermotogati</taxon>
        <taxon>Deinococcota</taxon>
        <taxon>Deinococci</taxon>
        <taxon>Thermales</taxon>
        <taxon>Thermaceae</taxon>
        <taxon>Thermus</taxon>
    </lineage>
</organism>